<organism>
    <name type="scientific">Pseudomonas putida (strain W619)</name>
    <dbReference type="NCBI Taxonomy" id="390235"/>
    <lineage>
        <taxon>Bacteria</taxon>
        <taxon>Pseudomonadati</taxon>
        <taxon>Pseudomonadota</taxon>
        <taxon>Gammaproteobacteria</taxon>
        <taxon>Pseudomonadales</taxon>
        <taxon>Pseudomonadaceae</taxon>
        <taxon>Pseudomonas</taxon>
    </lineage>
</organism>
<feature type="chain" id="PRO_1000094804" description="S-adenosylmethionine:tRNA ribosyltransferase-isomerase">
    <location>
        <begin position="1"/>
        <end position="349"/>
    </location>
</feature>
<gene>
    <name evidence="1" type="primary">queA</name>
    <name type="ordered locus">PputW619_4346</name>
</gene>
<evidence type="ECO:0000255" key="1">
    <source>
        <dbReference type="HAMAP-Rule" id="MF_00113"/>
    </source>
</evidence>
<dbReference type="EC" id="2.4.99.17" evidence="1"/>
<dbReference type="EMBL" id="CP000949">
    <property type="protein sequence ID" value="ACA74826.1"/>
    <property type="molecule type" value="Genomic_DNA"/>
</dbReference>
<dbReference type="SMR" id="B1JDS3"/>
<dbReference type="STRING" id="390235.PputW619_4346"/>
<dbReference type="KEGG" id="ppw:PputW619_4346"/>
<dbReference type="eggNOG" id="COG0809">
    <property type="taxonomic scope" value="Bacteria"/>
</dbReference>
<dbReference type="HOGENOM" id="CLU_039110_1_0_6"/>
<dbReference type="OrthoDB" id="9805933at2"/>
<dbReference type="UniPathway" id="UPA00392"/>
<dbReference type="GO" id="GO:0005737">
    <property type="term" value="C:cytoplasm"/>
    <property type="evidence" value="ECO:0007669"/>
    <property type="project" value="UniProtKB-SubCell"/>
</dbReference>
<dbReference type="GO" id="GO:0051075">
    <property type="term" value="F:S-adenosylmethionine:tRNA ribosyltransferase-isomerase activity"/>
    <property type="evidence" value="ECO:0007669"/>
    <property type="project" value="UniProtKB-EC"/>
</dbReference>
<dbReference type="GO" id="GO:0008616">
    <property type="term" value="P:queuosine biosynthetic process"/>
    <property type="evidence" value="ECO:0007669"/>
    <property type="project" value="UniProtKB-UniRule"/>
</dbReference>
<dbReference type="GO" id="GO:0002099">
    <property type="term" value="P:tRNA wobble guanine modification"/>
    <property type="evidence" value="ECO:0007669"/>
    <property type="project" value="TreeGrafter"/>
</dbReference>
<dbReference type="FunFam" id="2.40.10.240:FF:000001">
    <property type="entry name" value="S-adenosylmethionine:tRNA ribosyltransferase-isomerase"/>
    <property type="match status" value="1"/>
</dbReference>
<dbReference type="FunFam" id="3.40.1780.10:FF:000001">
    <property type="entry name" value="S-adenosylmethionine:tRNA ribosyltransferase-isomerase"/>
    <property type="match status" value="1"/>
</dbReference>
<dbReference type="Gene3D" id="2.40.10.240">
    <property type="entry name" value="QueA-like"/>
    <property type="match status" value="1"/>
</dbReference>
<dbReference type="Gene3D" id="3.40.1780.10">
    <property type="entry name" value="QueA-like"/>
    <property type="match status" value="1"/>
</dbReference>
<dbReference type="HAMAP" id="MF_00113">
    <property type="entry name" value="QueA"/>
    <property type="match status" value="1"/>
</dbReference>
<dbReference type="InterPro" id="IPR003699">
    <property type="entry name" value="QueA"/>
</dbReference>
<dbReference type="InterPro" id="IPR042118">
    <property type="entry name" value="QueA_dom1"/>
</dbReference>
<dbReference type="InterPro" id="IPR042119">
    <property type="entry name" value="QueA_dom2"/>
</dbReference>
<dbReference type="InterPro" id="IPR036100">
    <property type="entry name" value="QueA_sf"/>
</dbReference>
<dbReference type="NCBIfam" id="NF001140">
    <property type="entry name" value="PRK00147.1"/>
    <property type="match status" value="1"/>
</dbReference>
<dbReference type="NCBIfam" id="TIGR00113">
    <property type="entry name" value="queA"/>
    <property type="match status" value="1"/>
</dbReference>
<dbReference type="PANTHER" id="PTHR30307">
    <property type="entry name" value="S-ADENOSYLMETHIONINE:TRNA RIBOSYLTRANSFERASE-ISOMERASE"/>
    <property type="match status" value="1"/>
</dbReference>
<dbReference type="PANTHER" id="PTHR30307:SF0">
    <property type="entry name" value="S-ADENOSYLMETHIONINE:TRNA RIBOSYLTRANSFERASE-ISOMERASE"/>
    <property type="match status" value="1"/>
</dbReference>
<dbReference type="Pfam" id="PF02547">
    <property type="entry name" value="Queuosine_synth"/>
    <property type="match status" value="1"/>
</dbReference>
<dbReference type="SUPFAM" id="SSF111337">
    <property type="entry name" value="QueA-like"/>
    <property type="match status" value="1"/>
</dbReference>
<comment type="function">
    <text evidence="1">Transfers and isomerizes the ribose moiety from AdoMet to the 7-aminomethyl group of 7-deazaguanine (preQ1-tRNA) to give epoxyqueuosine (oQ-tRNA).</text>
</comment>
<comment type="catalytic activity">
    <reaction evidence="1">
        <text>7-aminomethyl-7-carbaguanosine(34) in tRNA + S-adenosyl-L-methionine = epoxyqueuosine(34) in tRNA + adenine + L-methionine + 2 H(+)</text>
        <dbReference type="Rhea" id="RHEA:32155"/>
        <dbReference type="Rhea" id="RHEA-COMP:10342"/>
        <dbReference type="Rhea" id="RHEA-COMP:18582"/>
        <dbReference type="ChEBI" id="CHEBI:15378"/>
        <dbReference type="ChEBI" id="CHEBI:16708"/>
        <dbReference type="ChEBI" id="CHEBI:57844"/>
        <dbReference type="ChEBI" id="CHEBI:59789"/>
        <dbReference type="ChEBI" id="CHEBI:82833"/>
        <dbReference type="ChEBI" id="CHEBI:194443"/>
        <dbReference type="EC" id="2.4.99.17"/>
    </reaction>
</comment>
<comment type="pathway">
    <text evidence="1">tRNA modification; tRNA-queuosine biosynthesis.</text>
</comment>
<comment type="subunit">
    <text evidence="1">Monomer.</text>
</comment>
<comment type="subcellular location">
    <subcellularLocation>
        <location evidence="1">Cytoplasm</location>
    </subcellularLocation>
</comment>
<comment type="similarity">
    <text evidence="1">Belongs to the QueA family.</text>
</comment>
<name>QUEA_PSEPW</name>
<reference key="1">
    <citation type="submission" date="2008-02" db="EMBL/GenBank/DDBJ databases">
        <title>Complete sequence of Pseudomonas putida W619.</title>
        <authorList>
            <person name="Copeland A."/>
            <person name="Lucas S."/>
            <person name="Lapidus A."/>
            <person name="Barry K."/>
            <person name="Detter J.C."/>
            <person name="Glavina del Rio T."/>
            <person name="Dalin E."/>
            <person name="Tice H."/>
            <person name="Pitluck S."/>
            <person name="Chain P."/>
            <person name="Malfatti S."/>
            <person name="Shin M."/>
            <person name="Vergez L."/>
            <person name="Schmutz J."/>
            <person name="Larimer F."/>
            <person name="Land M."/>
            <person name="Hauser L."/>
            <person name="Kyrpides N."/>
            <person name="Kim E."/>
            <person name="Taghavi S."/>
            <person name="Vangronsveld D."/>
            <person name="van der Lelie D."/>
            <person name="Richardson P."/>
        </authorList>
    </citation>
    <scope>NUCLEOTIDE SEQUENCE [LARGE SCALE GENOMIC DNA]</scope>
    <source>
        <strain>W619</strain>
    </source>
</reference>
<keyword id="KW-0963">Cytoplasm</keyword>
<keyword id="KW-0671">Queuosine biosynthesis</keyword>
<keyword id="KW-0949">S-adenosyl-L-methionine</keyword>
<keyword id="KW-0808">Transferase</keyword>
<proteinExistence type="inferred from homology"/>
<protein>
    <recommendedName>
        <fullName evidence="1">S-adenosylmethionine:tRNA ribosyltransferase-isomerase</fullName>
        <ecNumber evidence="1">2.4.99.17</ecNumber>
    </recommendedName>
    <alternativeName>
        <fullName evidence="1">Queuosine biosynthesis protein QueA</fullName>
    </alternativeName>
</protein>
<accession>B1JDS3</accession>
<sequence>MRVADFSFELPDSLIARHPLAERHGSRLLVLDGPSGALAHKQFTDLLDYLRPGDLMVFNNTRVIPARLFGQKASGGKLEVLVERVLDSHRVLAHVRASKAPKEGAVILIDGGGEAEMVARHDTLFELRFTEEVLPLLERVGHMPLPPYIDRPDDGADRERYQTVYAERAGAVAAPTAGLHFDQALLDKIAAKGVERAFVTLHVGAGTFQPVRVDKIEDHHMHKEWLEVSQDVVDAIEACRARGGRVVAVGTTSVRSLESAARDGVLKAFSGDTDIFIYPGRPFHVVDALVTNFHLPESTLLMLVSAFAGYPETMAAYAAAVEQGYRFFSYGDAMFITRNPAPRGPEDQA</sequence>